<proteinExistence type="inferred from homology"/>
<feature type="chain" id="PRO_1000065397" description="Redox-sensing transcriptional repressor Rex">
    <location>
        <begin position="1"/>
        <end position="210"/>
    </location>
</feature>
<feature type="DNA-binding region" description="H-T-H motif" evidence="1">
    <location>
        <begin position="17"/>
        <end position="56"/>
    </location>
</feature>
<feature type="binding site" evidence="1">
    <location>
        <begin position="91"/>
        <end position="96"/>
    </location>
    <ligand>
        <name>NAD(+)</name>
        <dbReference type="ChEBI" id="CHEBI:57540"/>
    </ligand>
</feature>
<organism>
    <name type="scientific">Clostridium novyi (strain NT)</name>
    <dbReference type="NCBI Taxonomy" id="386415"/>
    <lineage>
        <taxon>Bacteria</taxon>
        <taxon>Bacillati</taxon>
        <taxon>Bacillota</taxon>
        <taxon>Clostridia</taxon>
        <taxon>Eubacteriales</taxon>
        <taxon>Clostridiaceae</taxon>
        <taxon>Clostridium</taxon>
    </lineage>
</organism>
<sequence length="210" mass="23745">MEKKRNISMAVIRRLPKYYRYLAELMDNDVDRISSKELSEKIGFTASQIRQDLNNFGDFGQQGYGYNVKDLYNEIRSILGLDENYNIAIIGAGNIGQAIANYTNFDKMGFNLKGIFDVNPKLLGLKIRDVEIRDIDQLESFLQEEKIHIGVICVTKSNAQDVCNTLIKNGVKGIWNFAPIDLNGADNVVIENVHLSESLLTLTYLLNGFN</sequence>
<accession>A0Q2U4</accession>
<protein>
    <recommendedName>
        <fullName evidence="1">Redox-sensing transcriptional repressor Rex</fullName>
    </recommendedName>
</protein>
<gene>
    <name evidence="1" type="primary">rex</name>
    <name type="ordered locus">NT01CX_0475</name>
</gene>
<keyword id="KW-0963">Cytoplasm</keyword>
<keyword id="KW-0238">DNA-binding</keyword>
<keyword id="KW-0520">NAD</keyword>
<keyword id="KW-1185">Reference proteome</keyword>
<keyword id="KW-0678">Repressor</keyword>
<keyword id="KW-0804">Transcription</keyword>
<keyword id="KW-0805">Transcription regulation</keyword>
<dbReference type="EMBL" id="CP000382">
    <property type="protein sequence ID" value="ABK62473.1"/>
    <property type="molecule type" value="Genomic_DNA"/>
</dbReference>
<dbReference type="RefSeq" id="WP_011722928.1">
    <property type="nucleotide sequence ID" value="NC_008593.1"/>
</dbReference>
<dbReference type="SMR" id="A0Q2U4"/>
<dbReference type="STRING" id="386415.NT01CX_0475"/>
<dbReference type="KEGG" id="cno:NT01CX_0475"/>
<dbReference type="eggNOG" id="COG2344">
    <property type="taxonomic scope" value="Bacteria"/>
</dbReference>
<dbReference type="HOGENOM" id="CLU_061534_1_0_9"/>
<dbReference type="Proteomes" id="UP000008220">
    <property type="component" value="Chromosome"/>
</dbReference>
<dbReference type="GO" id="GO:0005737">
    <property type="term" value="C:cytoplasm"/>
    <property type="evidence" value="ECO:0007669"/>
    <property type="project" value="UniProtKB-SubCell"/>
</dbReference>
<dbReference type="GO" id="GO:0003677">
    <property type="term" value="F:DNA binding"/>
    <property type="evidence" value="ECO:0007669"/>
    <property type="project" value="UniProtKB-UniRule"/>
</dbReference>
<dbReference type="GO" id="GO:0003700">
    <property type="term" value="F:DNA-binding transcription factor activity"/>
    <property type="evidence" value="ECO:0007669"/>
    <property type="project" value="UniProtKB-UniRule"/>
</dbReference>
<dbReference type="GO" id="GO:0045892">
    <property type="term" value="P:negative regulation of DNA-templated transcription"/>
    <property type="evidence" value="ECO:0007669"/>
    <property type="project" value="InterPro"/>
</dbReference>
<dbReference type="GO" id="GO:0051775">
    <property type="term" value="P:response to redox state"/>
    <property type="evidence" value="ECO:0007669"/>
    <property type="project" value="InterPro"/>
</dbReference>
<dbReference type="Gene3D" id="3.40.50.720">
    <property type="entry name" value="NAD(P)-binding Rossmann-like Domain"/>
    <property type="match status" value="1"/>
</dbReference>
<dbReference type="Gene3D" id="1.10.10.10">
    <property type="entry name" value="Winged helix-like DNA-binding domain superfamily/Winged helix DNA-binding domain"/>
    <property type="match status" value="1"/>
</dbReference>
<dbReference type="HAMAP" id="MF_01131">
    <property type="entry name" value="Rex"/>
    <property type="match status" value="1"/>
</dbReference>
<dbReference type="InterPro" id="IPR003781">
    <property type="entry name" value="CoA-bd"/>
</dbReference>
<dbReference type="InterPro" id="IPR036291">
    <property type="entry name" value="NAD(P)-bd_dom_sf"/>
</dbReference>
<dbReference type="InterPro" id="IPR009718">
    <property type="entry name" value="Rex_DNA-bd_C_dom"/>
</dbReference>
<dbReference type="InterPro" id="IPR022876">
    <property type="entry name" value="Tscrpt_rep_Rex"/>
</dbReference>
<dbReference type="InterPro" id="IPR036388">
    <property type="entry name" value="WH-like_DNA-bd_sf"/>
</dbReference>
<dbReference type="InterPro" id="IPR036390">
    <property type="entry name" value="WH_DNA-bd_sf"/>
</dbReference>
<dbReference type="NCBIfam" id="NF003989">
    <property type="entry name" value="PRK05472.1-3"/>
    <property type="match status" value="1"/>
</dbReference>
<dbReference type="NCBIfam" id="NF003990">
    <property type="entry name" value="PRK05472.1-4"/>
    <property type="match status" value="1"/>
</dbReference>
<dbReference type="NCBIfam" id="NF003993">
    <property type="entry name" value="PRK05472.2-2"/>
    <property type="match status" value="1"/>
</dbReference>
<dbReference type="NCBIfam" id="NF003994">
    <property type="entry name" value="PRK05472.2-3"/>
    <property type="match status" value="1"/>
</dbReference>
<dbReference type="NCBIfam" id="NF003995">
    <property type="entry name" value="PRK05472.2-4"/>
    <property type="match status" value="1"/>
</dbReference>
<dbReference type="NCBIfam" id="NF003996">
    <property type="entry name" value="PRK05472.2-5"/>
    <property type="match status" value="1"/>
</dbReference>
<dbReference type="PANTHER" id="PTHR35786">
    <property type="entry name" value="REDOX-SENSING TRANSCRIPTIONAL REPRESSOR REX"/>
    <property type="match status" value="1"/>
</dbReference>
<dbReference type="PANTHER" id="PTHR35786:SF1">
    <property type="entry name" value="REDOX-SENSING TRANSCRIPTIONAL REPRESSOR REX 1"/>
    <property type="match status" value="1"/>
</dbReference>
<dbReference type="Pfam" id="PF02629">
    <property type="entry name" value="CoA_binding"/>
    <property type="match status" value="1"/>
</dbReference>
<dbReference type="Pfam" id="PF06971">
    <property type="entry name" value="Put_DNA-bind_N"/>
    <property type="match status" value="1"/>
</dbReference>
<dbReference type="SMART" id="SM00881">
    <property type="entry name" value="CoA_binding"/>
    <property type="match status" value="1"/>
</dbReference>
<dbReference type="SUPFAM" id="SSF51735">
    <property type="entry name" value="NAD(P)-binding Rossmann-fold domains"/>
    <property type="match status" value="1"/>
</dbReference>
<dbReference type="SUPFAM" id="SSF46785">
    <property type="entry name" value="Winged helix' DNA-binding domain"/>
    <property type="match status" value="1"/>
</dbReference>
<evidence type="ECO:0000255" key="1">
    <source>
        <dbReference type="HAMAP-Rule" id="MF_01131"/>
    </source>
</evidence>
<comment type="function">
    <text evidence="1">Modulates transcription in response to changes in cellular NADH/NAD(+) redox state.</text>
</comment>
<comment type="subunit">
    <text evidence="1">Homodimer.</text>
</comment>
<comment type="subcellular location">
    <subcellularLocation>
        <location evidence="1">Cytoplasm</location>
    </subcellularLocation>
</comment>
<comment type="similarity">
    <text evidence="1">Belongs to the transcriptional regulatory Rex family.</text>
</comment>
<reference key="1">
    <citation type="journal article" date="2006" name="Nat. Biotechnol.">
        <title>The genome and transcriptomes of the anti-tumor agent Clostridium novyi-NT.</title>
        <authorList>
            <person name="Bettegowda C."/>
            <person name="Huang X."/>
            <person name="Lin J."/>
            <person name="Cheong I."/>
            <person name="Kohli M."/>
            <person name="Szabo S.A."/>
            <person name="Zhang X."/>
            <person name="Diaz L.A. Jr."/>
            <person name="Velculescu V.E."/>
            <person name="Parmigiani G."/>
            <person name="Kinzler K.W."/>
            <person name="Vogelstein B."/>
            <person name="Zhou S."/>
        </authorList>
    </citation>
    <scope>NUCLEOTIDE SEQUENCE [LARGE SCALE GENOMIC DNA]</scope>
    <source>
        <strain>NT</strain>
    </source>
</reference>
<name>REX_CLONN</name>